<protein>
    <recommendedName>
        <fullName evidence="1">Protein translocase subunit SecA</fullName>
        <ecNumber evidence="1">7.4.2.8</ecNumber>
    </recommendedName>
</protein>
<accession>Q1IMP4</accession>
<organism>
    <name type="scientific">Koribacter versatilis (strain Ellin345)</name>
    <dbReference type="NCBI Taxonomy" id="204669"/>
    <lineage>
        <taxon>Bacteria</taxon>
        <taxon>Pseudomonadati</taxon>
        <taxon>Acidobacteriota</taxon>
        <taxon>Terriglobia</taxon>
        <taxon>Terriglobales</taxon>
        <taxon>Candidatus Korobacteraceae</taxon>
        <taxon>Candidatus Korobacter</taxon>
    </lineage>
</organism>
<reference key="1">
    <citation type="journal article" date="2009" name="Appl. Environ. Microbiol.">
        <title>Three genomes from the phylum Acidobacteria provide insight into the lifestyles of these microorganisms in soils.</title>
        <authorList>
            <person name="Ward N.L."/>
            <person name="Challacombe J.F."/>
            <person name="Janssen P.H."/>
            <person name="Henrissat B."/>
            <person name="Coutinho P.M."/>
            <person name="Wu M."/>
            <person name="Xie G."/>
            <person name="Haft D.H."/>
            <person name="Sait M."/>
            <person name="Badger J."/>
            <person name="Barabote R.D."/>
            <person name="Bradley B."/>
            <person name="Brettin T.S."/>
            <person name="Brinkac L.M."/>
            <person name="Bruce D."/>
            <person name="Creasy T."/>
            <person name="Daugherty S.C."/>
            <person name="Davidsen T.M."/>
            <person name="DeBoy R.T."/>
            <person name="Detter J.C."/>
            <person name="Dodson R.J."/>
            <person name="Durkin A.S."/>
            <person name="Ganapathy A."/>
            <person name="Gwinn-Giglio M."/>
            <person name="Han C.S."/>
            <person name="Khouri H."/>
            <person name="Kiss H."/>
            <person name="Kothari S.P."/>
            <person name="Madupu R."/>
            <person name="Nelson K.E."/>
            <person name="Nelson W.C."/>
            <person name="Paulsen I."/>
            <person name="Penn K."/>
            <person name="Ren Q."/>
            <person name="Rosovitz M.J."/>
            <person name="Selengut J.D."/>
            <person name="Shrivastava S."/>
            <person name="Sullivan S.A."/>
            <person name="Tapia R."/>
            <person name="Thompson L.S."/>
            <person name="Watkins K.L."/>
            <person name="Yang Q."/>
            <person name="Yu C."/>
            <person name="Zafar N."/>
            <person name="Zhou L."/>
            <person name="Kuske C.R."/>
        </authorList>
    </citation>
    <scope>NUCLEOTIDE SEQUENCE [LARGE SCALE GENOMIC DNA]</scope>
    <source>
        <strain>Ellin345</strain>
    </source>
</reference>
<keyword id="KW-0067">ATP-binding</keyword>
<keyword id="KW-0997">Cell inner membrane</keyword>
<keyword id="KW-1003">Cell membrane</keyword>
<keyword id="KW-0963">Cytoplasm</keyword>
<keyword id="KW-0472">Membrane</keyword>
<keyword id="KW-0479">Metal-binding</keyword>
<keyword id="KW-0547">Nucleotide-binding</keyword>
<keyword id="KW-0653">Protein transport</keyword>
<keyword id="KW-1185">Reference proteome</keyword>
<keyword id="KW-1278">Translocase</keyword>
<keyword id="KW-0811">Translocation</keyword>
<keyword id="KW-0813">Transport</keyword>
<keyword id="KW-0862">Zinc</keyword>
<dbReference type="EC" id="7.4.2.8" evidence="1"/>
<dbReference type="EMBL" id="CP000360">
    <property type="protein sequence ID" value="ABF41856.1"/>
    <property type="molecule type" value="Genomic_DNA"/>
</dbReference>
<dbReference type="RefSeq" id="WP_011523657.1">
    <property type="nucleotide sequence ID" value="NC_008009.1"/>
</dbReference>
<dbReference type="SMR" id="Q1IMP4"/>
<dbReference type="STRING" id="204669.Acid345_2855"/>
<dbReference type="EnsemblBacteria" id="ABF41856">
    <property type="protein sequence ID" value="ABF41856"/>
    <property type="gene ID" value="Acid345_2855"/>
</dbReference>
<dbReference type="KEGG" id="aba:Acid345_2855"/>
<dbReference type="eggNOG" id="COG0653">
    <property type="taxonomic scope" value="Bacteria"/>
</dbReference>
<dbReference type="HOGENOM" id="CLU_005314_3_0_0"/>
<dbReference type="OrthoDB" id="9805579at2"/>
<dbReference type="Proteomes" id="UP000002432">
    <property type="component" value="Chromosome"/>
</dbReference>
<dbReference type="GO" id="GO:0031522">
    <property type="term" value="C:cell envelope Sec protein transport complex"/>
    <property type="evidence" value="ECO:0007669"/>
    <property type="project" value="TreeGrafter"/>
</dbReference>
<dbReference type="GO" id="GO:0005829">
    <property type="term" value="C:cytosol"/>
    <property type="evidence" value="ECO:0007669"/>
    <property type="project" value="TreeGrafter"/>
</dbReference>
<dbReference type="GO" id="GO:0005886">
    <property type="term" value="C:plasma membrane"/>
    <property type="evidence" value="ECO:0007669"/>
    <property type="project" value="UniProtKB-SubCell"/>
</dbReference>
<dbReference type="GO" id="GO:0005524">
    <property type="term" value="F:ATP binding"/>
    <property type="evidence" value="ECO:0007669"/>
    <property type="project" value="UniProtKB-UniRule"/>
</dbReference>
<dbReference type="GO" id="GO:0046872">
    <property type="term" value="F:metal ion binding"/>
    <property type="evidence" value="ECO:0007669"/>
    <property type="project" value="UniProtKB-KW"/>
</dbReference>
<dbReference type="GO" id="GO:0008564">
    <property type="term" value="F:protein-exporting ATPase activity"/>
    <property type="evidence" value="ECO:0007669"/>
    <property type="project" value="UniProtKB-EC"/>
</dbReference>
<dbReference type="GO" id="GO:0065002">
    <property type="term" value="P:intracellular protein transmembrane transport"/>
    <property type="evidence" value="ECO:0007669"/>
    <property type="project" value="UniProtKB-UniRule"/>
</dbReference>
<dbReference type="GO" id="GO:0017038">
    <property type="term" value="P:protein import"/>
    <property type="evidence" value="ECO:0007669"/>
    <property type="project" value="InterPro"/>
</dbReference>
<dbReference type="GO" id="GO:0006605">
    <property type="term" value="P:protein targeting"/>
    <property type="evidence" value="ECO:0007669"/>
    <property type="project" value="UniProtKB-UniRule"/>
</dbReference>
<dbReference type="GO" id="GO:0043952">
    <property type="term" value="P:protein transport by the Sec complex"/>
    <property type="evidence" value="ECO:0007669"/>
    <property type="project" value="TreeGrafter"/>
</dbReference>
<dbReference type="CDD" id="cd17928">
    <property type="entry name" value="DEXDc_SecA"/>
    <property type="match status" value="1"/>
</dbReference>
<dbReference type="CDD" id="cd18803">
    <property type="entry name" value="SF2_C_secA"/>
    <property type="match status" value="1"/>
</dbReference>
<dbReference type="FunFam" id="3.40.50.300:FF:000113">
    <property type="entry name" value="Preprotein translocase subunit SecA"/>
    <property type="match status" value="1"/>
</dbReference>
<dbReference type="FunFam" id="3.40.50.300:FF:000246">
    <property type="entry name" value="Preprotein translocase subunit SecA"/>
    <property type="match status" value="1"/>
</dbReference>
<dbReference type="FunFam" id="1.10.3060.10:FF:000003">
    <property type="entry name" value="Protein translocase subunit SecA"/>
    <property type="match status" value="1"/>
</dbReference>
<dbReference type="FunFam" id="3.40.50.300:FF:000334">
    <property type="entry name" value="Protein translocase subunit SecA"/>
    <property type="match status" value="1"/>
</dbReference>
<dbReference type="FunFam" id="3.90.1440.10:FF:000002">
    <property type="entry name" value="Protein translocase subunit SecA"/>
    <property type="match status" value="1"/>
</dbReference>
<dbReference type="Gene3D" id="3.10.450.50">
    <property type="match status" value="1"/>
</dbReference>
<dbReference type="Gene3D" id="1.10.3060.10">
    <property type="entry name" value="Helical scaffold and wing domains of SecA"/>
    <property type="match status" value="1"/>
</dbReference>
<dbReference type="Gene3D" id="3.40.50.300">
    <property type="entry name" value="P-loop containing nucleotide triphosphate hydrolases"/>
    <property type="match status" value="2"/>
</dbReference>
<dbReference type="Gene3D" id="3.90.1440.10">
    <property type="entry name" value="SecA, preprotein cross-linking domain"/>
    <property type="match status" value="1"/>
</dbReference>
<dbReference type="HAMAP" id="MF_01382">
    <property type="entry name" value="SecA"/>
    <property type="match status" value="1"/>
</dbReference>
<dbReference type="InterPro" id="IPR014001">
    <property type="entry name" value="Helicase_ATP-bd"/>
</dbReference>
<dbReference type="InterPro" id="IPR027417">
    <property type="entry name" value="P-loop_NTPase"/>
</dbReference>
<dbReference type="InterPro" id="IPR004027">
    <property type="entry name" value="SEC_C_motif"/>
</dbReference>
<dbReference type="InterPro" id="IPR000185">
    <property type="entry name" value="SecA"/>
</dbReference>
<dbReference type="InterPro" id="IPR020937">
    <property type="entry name" value="SecA_CS"/>
</dbReference>
<dbReference type="InterPro" id="IPR011115">
    <property type="entry name" value="SecA_DEAD"/>
</dbReference>
<dbReference type="InterPro" id="IPR014018">
    <property type="entry name" value="SecA_motor_DEAD"/>
</dbReference>
<dbReference type="InterPro" id="IPR011130">
    <property type="entry name" value="SecA_preprotein_X-link_dom"/>
</dbReference>
<dbReference type="InterPro" id="IPR044722">
    <property type="entry name" value="SecA_SF2_C"/>
</dbReference>
<dbReference type="InterPro" id="IPR011116">
    <property type="entry name" value="SecA_Wing/Scaffold"/>
</dbReference>
<dbReference type="InterPro" id="IPR036266">
    <property type="entry name" value="SecA_Wing/Scaffold_sf"/>
</dbReference>
<dbReference type="InterPro" id="IPR036670">
    <property type="entry name" value="SecA_X-link_sf"/>
</dbReference>
<dbReference type="NCBIfam" id="NF009538">
    <property type="entry name" value="PRK12904.1"/>
    <property type="match status" value="1"/>
</dbReference>
<dbReference type="NCBIfam" id="TIGR00963">
    <property type="entry name" value="secA"/>
    <property type="match status" value="1"/>
</dbReference>
<dbReference type="PANTHER" id="PTHR30612:SF0">
    <property type="entry name" value="CHLOROPLAST PROTEIN-TRANSPORTING ATPASE"/>
    <property type="match status" value="1"/>
</dbReference>
<dbReference type="PANTHER" id="PTHR30612">
    <property type="entry name" value="SECA INNER MEMBRANE COMPONENT OF SEC PROTEIN SECRETION SYSTEM"/>
    <property type="match status" value="1"/>
</dbReference>
<dbReference type="Pfam" id="PF21090">
    <property type="entry name" value="P-loop_SecA"/>
    <property type="match status" value="1"/>
</dbReference>
<dbReference type="Pfam" id="PF02810">
    <property type="entry name" value="SEC-C"/>
    <property type="match status" value="1"/>
</dbReference>
<dbReference type="Pfam" id="PF07517">
    <property type="entry name" value="SecA_DEAD"/>
    <property type="match status" value="1"/>
</dbReference>
<dbReference type="Pfam" id="PF01043">
    <property type="entry name" value="SecA_PP_bind"/>
    <property type="match status" value="1"/>
</dbReference>
<dbReference type="Pfam" id="PF07516">
    <property type="entry name" value="SecA_SW"/>
    <property type="match status" value="1"/>
</dbReference>
<dbReference type="PRINTS" id="PR00906">
    <property type="entry name" value="SECA"/>
</dbReference>
<dbReference type="SMART" id="SM00957">
    <property type="entry name" value="SecA_DEAD"/>
    <property type="match status" value="1"/>
</dbReference>
<dbReference type="SMART" id="SM00958">
    <property type="entry name" value="SecA_PP_bind"/>
    <property type="match status" value="1"/>
</dbReference>
<dbReference type="SUPFAM" id="SSF81886">
    <property type="entry name" value="Helical scaffold and wing domains of SecA"/>
    <property type="match status" value="1"/>
</dbReference>
<dbReference type="SUPFAM" id="SSF52540">
    <property type="entry name" value="P-loop containing nucleoside triphosphate hydrolases"/>
    <property type="match status" value="2"/>
</dbReference>
<dbReference type="SUPFAM" id="SSF81767">
    <property type="entry name" value="Pre-protein crosslinking domain of SecA"/>
    <property type="match status" value="1"/>
</dbReference>
<dbReference type="PROSITE" id="PS01312">
    <property type="entry name" value="SECA"/>
    <property type="match status" value="1"/>
</dbReference>
<dbReference type="PROSITE" id="PS51196">
    <property type="entry name" value="SECA_MOTOR_DEAD"/>
    <property type="match status" value="1"/>
</dbReference>
<sequence>MINKAIAKIFGTQNEREIKRLMPIVAQINALEPQVKQFSDDQLRAKTDEFRAKIQERLAKYEEAEHKNHALKEVLDEILPEAFAICREAGWRVLNMRHFDVQLIGGMVLHSGRISEMKTGEGKTLVATLPVYLNALSGRGVHVVTVNDYLAKRDSEWMGKLYNFLGLSVGVIVHDLDDDQRREAYRADVTYGTNNEFGFDYLRDNMKFELSDCVQREFNFAIVDEVDSILIDEARTPLIISGASEESTDKYQRVNVIIPRLEKGEEIEGREPGDKILTGDYVVDEKHKTITVSDDGWEKVEKLLGIGNIADPENWDLKHHVEVAIKAHALYHVDVEYVVKDGEVLIVDEFTGRLMPGRRWSDGLHQAVEAKEGVKVERENQTLATITFQNYFRLYKKLAGMTGTAETEAAEFDKIYKLEVVVIPTNRTLLRKENPDVVYRTEKEKFFAVADEIAKLSVSQQPVLVGTVSIEKSERLSELLKRKNIKHVVLNAKFHEREAEYVAQAGRLGQVTIATNMAGRGTDILLGGNPEFMAKQETLKKGVAQPVHAAGGEVDARPDDPNTVYWYYAGNEYVCPRAQWEEILAHYKTQTDFEHEQVKQAGGLFILGTERHESRRIDNQLRGRAGRQGDPGASRFYLSLEDDLMRIFAKEWVSTLLQRLGMEEGVPIESKMISRRIEKAQEAVEAQNFEARKHLLEYDDVMNKQRMAVYGLRRQLLEGLDQKELIIDEYVTEILGDLLDKFAPTEKHPEDWDIAGLKGEIFTRFGVDIIAEGVEPEKLNRMQLGDGIFDKLKERYEAKEQLIGNDQMRHHERVIMLSVIDQLWKDHLLNMDHLKEGIGLRGYAQHDPLVEYKRESFDMFEGMMATFKEQTVRYLYLMQIIDAATNMPVEIPRRRAPENVRELGPVLEAENAPEPQISGGNGQQPPQRRQQTSLDDLEKQFERKKKRELEQARMAGGGMPDAVQQVVRSGDKIGRNDPCFCGSGKKYKKCHGA</sequence>
<proteinExistence type="inferred from homology"/>
<name>SECA_KORVE</name>
<gene>
    <name evidence="1" type="primary">secA</name>
    <name type="ordered locus">Acid345_2855</name>
</gene>
<evidence type="ECO:0000255" key="1">
    <source>
        <dbReference type="HAMAP-Rule" id="MF_01382"/>
    </source>
</evidence>
<evidence type="ECO:0000256" key="2">
    <source>
        <dbReference type="SAM" id="MobiDB-lite"/>
    </source>
</evidence>
<feature type="chain" id="PRO_0000318302" description="Protein translocase subunit SecA">
    <location>
        <begin position="1"/>
        <end position="993"/>
    </location>
</feature>
<feature type="region of interest" description="Disordered" evidence="2">
    <location>
        <begin position="910"/>
        <end position="962"/>
    </location>
</feature>
<feature type="compositionally biased region" description="Basic and acidic residues" evidence="2">
    <location>
        <begin position="936"/>
        <end position="951"/>
    </location>
</feature>
<feature type="binding site" evidence="1">
    <location>
        <position position="102"/>
    </location>
    <ligand>
        <name>ATP</name>
        <dbReference type="ChEBI" id="CHEBI:30616"/>
    </ligand>
</feature>
<feature type="binding site" evidence="1">
    <location>
        <begin position="120"/>
        <end position="124"/>
    </location>
    <ligand>
        <name>ATP</name>
        <dbReference type="ChEBI" id="CHEBI:30616"/>
    </ligand>
</feature>
<feature type="binding site" evidence="1">
    <location>
        <position position="523"/>
    </location>
    <ligand>
        <name>ATP</name>
        <dbReference type="ChEBI" id="CHEBI:30616"/>
    </ligand>
</feature>
<feature type="binding site" evidence="1">
    <location>
        <position position="979"/>
    </location>
    <ligand>
        <name>Zn(2+)</name>
        <dbReference type="ChEBI" id="CHEBI:29105"/>
    </ligand>
</feature>
<feature type="binding site" evidence="1">
    <location>
        <position position="981"/>
    </location>
    <ligand>
        <name>Zn(2+)</name>
        <dbReference type="ChEBI" id="CHEBI:29105"/>
    </ligand>
</feature>
<feature type="binding site" evidence="1">
    <location>
        <position position="990"/>
    </location>
    <ligand>
        <name>Zn(2+)</name>
        <dbReference type="ChEBI" id="CHEBI:29105"/>
    </ligand>
</feature>
<feature type="binding site" evidence="1">
    <location>
        <position position="991"/>
    </location>
    <ligand>
        <name>Zn(2+)</name>
        <dbReference type="ChEBI" id="CHEBI:29105"/>
    </ligand>
</feature>
<comment type="function">
    <text evidence="1">Part of the Sec protein translocase complex. Interacts with the SecYEG preprotein conducting channel. Has a central role in coupling the hydrolysis of ATP to the transfer of proteins into and across the cell membrane, serving as an ATP-driven molecular motor driving the stepwise translocation of polypeptide chains across the membrane.</text>
</comment>
<comment type="catalytic activity">
    <reaction evidence="1">
        <text>ATP + H2O + cellular proteinSide 1 = ADP + phosphate + cellular proteinSide 2.</text>
        <dbReference type="EC" id="7.4.2.8"/>
    </reaction>
</comment>
<comment type="cofactor">
    <cofactor evidence="1">
        <name>Zn(2+)</name>
        <dbReference type="ChEBI" id="CHEBI:29105"/>
    </cofactor>
    <text evidence="1">May bind 1 zinc ion per subunit.</text>
</comment>
<comment type="subunit">
    <text evidence="1">Monomer and homodimer. Part of the essential Sec protein translocation apparatus which comprises SecA, SecYEG and auxiliary proteins SecDF. Other proteins may also be involved.</text>
</comment>
<comment type="subcellular location">
    <subcellularLocation>
        <location evidence="1">Cell inner membrane</location>
        <topology evidence="1">Peripheral membrane protein</topology>
        <orientation evidence="1">Cytoplasmic side</orientation>
    </subcellularLocation>
    <subcellularLocation>
        <location evidence="1">Cytoplasm</location>
    </subcellularLocation>
    <text evidence="1">Distribution is 50-50.</text>
</comment>
<comment type="similarity">
    <text evidence="1">Belongs to the SecA family.</text>
</comment>